<sequence length="494" mass="55051">MKKQAFSSEQYLNLQRDHILERINQFDGKLYLEFGGKMLEDFHAARVLPGYEPDNKIKLLQELKEQVEVVIAINASNIEHSKARGDLGISYDQEVLRLIDKFNELGIFVGSVVITQYAGQPAADAFRNQLEKNGIDSYLHYPIKGYPTDMDHIISPEGMGKNDYIKTSRNLIVVTAPGPGSGKLATCMSNMYHDQINGIKSGYAKFETFPVWNLPLHHPVNLAYEAATADLDDVNMIDPFHLQTYGETTVNYNRDIEIFPVLKRMLERILGKSPYASPTDMGVNMVGFAITDDEAAVEASKQEIIRRYYQTVLDFKAEKVGEAAVKKIELLMNDLGITPADRKVAVVARQKAEETGGPALAFELPNGEIVTGKNSELFGPTAAALINAIKKSADIAKEVKLIEPEVVKPIQGLKIDHLGSRNPRLHSNEILIALAITATENPDAARAMEELGNLKGSEAHSTIILTDEDKNVLRKLGINVTFDPYYQYDRLYRK</sequence>
<reference key="1">
    <citation type="journal article" date="2010" name="Genome Biol.">
        <title>Structure and dynamics of the pan-genome of Streptococcus pneumoniae and closely related species.</title>
        <authorList>
            <person name="Donati C."/>
            <person name="Hiller N.L."/>
            <person name="Tettelin H."/>
            <person name="Muzzi A."/>
            <person name="Croucher N.J."/>
            <person name="Angiuoli S.V."/>
            <person name="Oggioni M."/>
            <person name="Dunning Hotopp J.C."/>
            <person name="Hu F.Z."/>
            <person name="Riley D.R."/>
            <person name="Covacci A."/>
            <person name="Mitchell T.J."/>
            <person name="Bentley S.D."/>
            <person name="Kilian M."/>
            <person name="Ehrlich G.D."/>
            <person name="Rappuoli R."/>
            <person name="Moxon E.R."/>
            <person name="Masignani V."/>
        </authorList>
    </citation>
    <scope>NUCLEOTIDE SEQUENCE [LARGE SCALE GENOMIC DNA]</scope>
    <source>
        <strain>70585</strain>
    </source>
</reference>
<proteinExistence type="inferred from homology"/>
<comment type="similarity">
    <text evidence="1">Belongs to the UPF0371 family.</text>
</comment>
<protein>
    <recommendedName>
        <fullName evidence="1">UPF0371 protein SP70585_0405</fullName>
    </recommendedName>
</protein>
<name>Y405_STRP7</name>
<organism>
    <name type="scientific">Streptococcus pneumoniae (strain 70585)</name>
    <dbReference type="NCBI Taxonomy" id="488221"/>
    <lineage>
        <taxon>Bacteria</taxon>
        <taxon>Bacillati</taxon>
        <taxon>Bacillota</taxon>
        <taxon>Bacilli</taxon>
        <taxon>Lactobacillales</taxon>
        <taxon>Streptococcaceae</taxon>
        <taxon>Streptococcus</taxon>
    </lineage>
</organism>
<gene>
    <name type="ordered locus">SP70585_0405</name>
</gene>
<evidence type="ECO:0000255" key="1">
    <source>
        <dbReference type="HAMAP-Rule" id="MF_01567"/>
    </source>
</evidence>
<dbReference type="EMBL" id="CP000918">
    <property type="protein sequence ID" value="ACO17333.1"/>
    <property type="molecule type" value="Genomic_DNA"/>
</dbReference>
<dbReference type="RefSeq" id="WP_000743612.1">
    <property type="nucleotide sequence ID" value="NC_012468.1"/>
</dbReference>
<dbReference type="SMR" id="C1CBC0"/>
<dbReference type="KEGG" id="snm:SP70585_0405"/>
<dbReference type="HOGENOM" id="CLU_046981_0_0_9"/>
<dbReference type="Proteomes" id="UP000002211">
    <property type="component" value="Chromosome"/>
</dbReference>
<dbReference type="Gene3D" id="1.20.1570.10">
    <property type="entry name" value="dip2346 domain like"/>
    <property type="match status" value="1"/>
</dbReference>
<dbReference type="Gene3D" id="3.10.630.10">
    <property type="entry name" value="dip2346 domain like"/>
    <property type="match status" value="1"/>
</dbReference>
<dbReference type="Gene3D" id="3.40.140.40">
    <property type="entry name" value="Domain of unknown function (DUF1846), C-terminal subdomain"/>
    <property type="match status" value="1"/>
</dbReference>
<dbReference type="HAMAP" id="MF_01567">
    <property type="entry name" value="UPF0371"/>
    <property type="match status" value="1"/>
</dbReference>
<dbReference type="InterPro" id="IPR014999">
    <property type="entry name" value="DUF1846"/>
</dbReference>
<dbReference type="InterPro" id="IPR048441">
    <property type="entry name" value="DUF1846_C"/>
</dbReference>
<dbReference type="InterPro" id="IPR048496">
    <property type="entry name" value="DUF1846_N"/>
</dbReference>
<dbReference type="NCBIfam" id="NF010184">
    <property type="entry name" value="PRK13663.1"/>
    <property type="match status" value="1"/>
</dbReference>
<dbReference type="Pfam" id="PF08903">
    <property type="entry name" value="DUF1846"/>
    <property type="match status" value="1"/>
</dbReference>
<dbReference type="Pfam" id="PF20921">
    <property type="entry name" value="DUF1846_C"/>
    <property type="match status" value="1"/>
</dbReference>
<dbReference type="PIRSF" id="PIRSF033132">
    <property type="entry name" value="DUF1846"/>
    <property type="match status" value="1"/>
</dbReference>
<feature type="chain" id="PRO_1000185462" description="UPF0371 protein SP70585_0405">
    <location>
        <begin position="1"/>
        <end position="494"/>
    </location>
</feature>
<accession>C1CBC0</accession>